<sequence length="1783" mass="200591">MAKTGAEDHREALSQSSLSLLTEAMEVLQQSSPEGTLDGNTVNPIYKYILNDLPREFMSSQAKAVIKTTDDYLQSQFGPNRLVHSAAVSEGSGLQDCSTHQTASDHSHDEISDLDSYKSNSKNNSCSISASKRNRPVSAPVGQLRVAEFSSLKFQSARNWQKLSQRHKLQPRVIKVTAYKNGSRTVFARVTVPTITLLLEECTEKLNLNMAARRVFLADGKEALEPEDIPHEADVYVSTGEPFLNPFKKIKDHLLLIKKVTWTMNGLMLPTDIKRRKTKPVLSIRMKKLTERTSVRILFFKNGMGQDGHEITVGKETMKKVLDTCTIRMNLNLPARYFYDLYGRKIEDISKVPLLEKCLQNSITPLRGLLWVSKGEGFSPSGAKMYIQGVLLALYQRLKSAKKYYKQLNLVMNEQKEKITEKVILSMTAKEHHKEQEEVSRLIDELQTAIKSNIGHLCKLGPQLQAEQEQFSSYVYQHIKSLPANTLVPGGLQLKVFENGKNTGEISVGISKKDLGSDSPIQTDHMMERLLLKIHQRLQGSSINPPGLNYSSMRLFDENGQEIKNPLSLKNEQKIWVSYGRAYRSPLNLALGLTFDRVSAFARGDIMVAYKTFLDPNAVLLPGCGNWEVCEGFPINFNCTSQQIPDQFEKVDLENHFLQNKVDPNIVLHASVSIGKWSFSGSEASSRSQIAPSILWPVASVWLITKTGMILSRAITQGCLAIGHPIRVKAAEGTSLEGYKLILQKRHSGDDSQKWVFGTDGCIYSKAYPQFVLTYLEELNAQVDVTQTEYHIHHGAWTTAHQEHGRNLAEEVLQESASNLGLKQLPEPSDTHLMPEGSLEETGELTVALVRKLEEKHPKASAQRWAIKHEGTSKPGQWKHSRVENPLWNKLTYMWPVLPSGQLNEEFDWPIQGLLVPSSPPMKKPICKTTEPYAPVRLRVLQNGEKNKNRSVTILGPDISPGRKTQCTEILNLPSAARRLYNEKGKEIFALKDLQRDELVYVSCGELWINPDLSIAQQKKQIFLRNLESDIAKIQIFCSTHKIEALVLEVQSDIVSGSKLAVHKPVAIFGEEKQVTEPEEKQMQEDPLTTENASSEILDSHVRAHLRMKACHTLPRYAWQETSHDFDEDDSLPKKTEKGLFENVEPQKKHSCSPKHSKLHKHCHQQFEYRDGQIISHAAPQLVLGVQGPNLRSGMEVVLVEKKSDGSHQRWIHQEDSRTFHLVSNPDLVLAVSMTKTRNEVCGYPVIVQKYKPYNNGAANQKWHYMKNIKALVAFHSTALDKEITSANYAGVCTSSVIKEENIDQPGYCYLSPDGKRKTMLCLACGQSMRTEKGLKQLLPGVPFLCISGTKTQKPFLQGPFKVISVAEVDLSCDKAEKTLSYYQARLLSLRMKTCTQAASHSGMAATHQKAVKIIAYKNGDGYRNGKLIVAGTFPMLLTECTEQLGLARAASKVYTKDGTPIFTLRDLVLWALDESFLQRDSEKQKQDAAPVGKEQIIVEKNPRMKVKNRLFAKSVTSDSLDGIDKSLLTLILRNPIAIWVSCGEPFLPPNALQKAEKLEKQNWLKKDRILADLDTMRHKMRQLKGRRVAACQPATMVPTKSPVQPVVVEGGWTEQTQQEIKLMELIRHTEAHLSEIQEMESKINFPIATKRIAVKPSNLYKQPNTKRVWIYLNGGRPEDGTYAWGKTISELLQDCSSRLKMTHPARALYTPSGEPIQSWDDIERDMVICVSMGHGFKTPKELKQLMEIRANYARIRRQQGPQATDIVVSPSTKLLSLAHLHN</sequence>
<keyword id="KW-0025">Alternative splicing</keyword>
<keyword id="KW-0131">Cell cycle</keyword>
<keyword id="KW-0132">Cell division</keyword>
<keyword id="KW-0963">Cytoplasm</keyword>
<keyword id="KW-0206">Cytoskeleton</keyword>
<keyword id="KW-0430">Lectin</keyword>
<keyword id="KW-0493">Microtubule</keyword>
<keyword id="KW-0498">Mitosis</keyword>
<keyword id="KW-1267">Proteomics identification</keyword>
<keyword id="KW-1185">Reference proteome</keyword>
<keyword id="KW-0677">Repeat</keyword>
<evidence type="ECO:0000255" key="1">
    <source>
        <dbReference type="PROSITE-ProRule" id="PRU00072"/>
    </source>
</evidence>
<evidence type="ECO:0000255" key="2">
    <source>
        <dbReference type="PROSITE-ProRule" id="PRU00174"/>
    </source>
</evidence>
<evidence type="ECO:0000256" key="3">
    <source>
        <dbReference type="SAM" id="MobiDB-lite"/>
    </source>
</evidence>
<evidence type="ECO:0000269" key="4">
    <source>
    </source>
</evidence>
<evidence type="ECO:0000303" key="5">
    <source>
    </source>
</evidence>
<evidence type="ECO:0000305" key="6"/>
<evidence type="ECO:0000312" key="7">
    <source>
        <dbReference type="HGNC" id="HGNC:20625"/>
    </source>
</evidence>
<organism>
    <name type="scientific">Homo sapiens</name>
    <name type="common">Human</name>
    <dbReference type="NCBI Taxonomy" id="9606"/>
    <lineage>
        <taxon>Eukaryota</taxon>
        <taxon>Metazoa</taxon>
        <taxon>Chordata</taxon>
        <taxon>Craniata</taxon>
        <taxon>Vertebrata</taxon>
        <taxon>Euteleostomi</taxon>
        <taxon>Mammalia</taxon>
        <taxon>Eutheria</taxon>
        <taxon>Euarchontoglires</taxon>
        <taxon>Primates</taxon>
        <taxon>Haplorrhini</taxon>
        <taxon>Catarrhini</taxon>
        <taxon>Hominidae</taxon>
        <taxon>Homo</taxon>
    </lineage>
</organism>
<name>DCDC1_HUMAN</name>
<proteinExistence type="evidence at protein level"/>
<gene>
    <name evidence="7" type="primary">DCDC1</name>
    <name evidence="5" type="synonym">DCDC5</name>
    <name type="synonym">KIAA1493</name>
</gene>
<comment type="function">
    <text evidence="4">Microtubule-binding protein which plays an important role in mediating dynein-dependent transport of RAB8A-positive vesicles to the midbody during cytokinesis (PubMed:22159412).</text>
</comment>
<comment type="subunit">
    <text evidence="4">Interacts with dynein intermediate chain, tubulin, RAB8A, RAB3IP, NUDC, PAFAH1B1 and DCTN1 (PubMed:22159412).</text>
</comment>
<comment type="subcellular location">
    <subcellularLocation>
        <location evidence="4">Midbody</location>
        <location evidence="4">Midbody ring</location>
    </subcellularLocation>
    <subcellularLocation>
        <location evidence="4">Midbody</location>
    </subcellularLocation>
    <subcellularLocation>
        <location evidence="4">Cytoplasm</location>
        <location evidence="4">Cytoskeleton</location>
        <location evidence="4">Spindle</location>
    </subcellularLocation>
    <text evidence="4">Associated with microtubules, in particular, with stabilized microtubules of the mitotic spindle during metaphase and with midbody microtubules during cytokinesis.</text>
</comment>
<comment type="alternative products">
    <event type="alternative splicing"/>
    <isoform>
        <id>M0R2J8-1</id>
        <name>1</name>
        <sequence type="displayed"/>
    </isoform>
    <isoform>
        <id>M0R2J8-2</id>
        <name>2</name>
        <sequence type="described" ref="VSP_060022 VSP_060023"/>
    </isoform>
    <isoform>
        <id>M0R2J8-3</id>
        <name>3</name>
        <sequence type="described" ref="VSP_060024 VSP_060025"/>
    </isoform>
</comment>
<comment type="sequence caution" evidence="6">
    <conflict type="miscellaneous discrepancy">
        <sequence resource="EMBL-CDS" id="BAC87240"/>
    </conflict>
    <text>Contaminating sequence and several conflicts. Sequence of unknown origin in the N-terminal part of the CDS.</text>
</comment>
<feature type="chain" id="PRO_0000446088" description="Doublecortin domain-containing protein 1">
    <location>
        <begin position="1"/>
        <end position="1783"/>
    </location>
</feature>
<feature type="domain" description="Doublecortin 1" evidence="1">
    <location>
        <begin position="168"/>
        <end position="252"/>
    </location>
</feature>
<feature type="domain" description="Ricin B-type lectin 1" evidence="2">
    <location>
        <begin position="702"/>
        <end position="800"/>
    </location>
</feature>
<feature type="domain" description="Doublecortin 2" evidence="1">
    <location>
        <begin position="925"/>
        <end position="1015"/>
    </location>
</feature>
<feature type="domain" description="Ricin B-type lectin 2" evidence="2">
    <location>
        <begin position="1151"/>
        <end position="1266"/>
    </location>
</feature>
<feature type="region of interest" description="Disordered" evidence="3">
    <location>
        <begin position="93"/>
        <end position="133"/>
    </location>
</feature>
<feature type="region of interest" description="Disordered" evidence="3">
    <location>
        <begin position="860"/>
        <end position="880"/>
    </location>
</feature>
<feature type="compositionally biased region" description="Low complexity" evidence="3">
    <location>
        <begin position="117"/>
        <end position="131"/>
    </location>
</feature>
<feature type="splice variant" id="VSP_060022" description="In isoform 2.">
    <original>DHLLLIKKVTWTMNGLMLP</original>
    <variation>GFRYLYNKNESKFTSQIFL</variation>
    <location>
        <begin position="252"/>
        <end position="270"/>
    </location>
</feature>
<feature type="splice variant" id="VSP_060023" description="In isoform 2.">
    <location>
        <begin position="271"/>
        <end position="1783"/>
    </location>
</feature>
<feature type="splice variant" id="VSP_060024" description="In isoform 3.">
    <original>VPL</original>
    <variation>GKH</variation>
    <location>
        <begin position="352"/>
        <end position="354"/>
    </location>
</feature>
<feature type="splice variant" id="VSP_060025" description="In isoform 3.">
    <location>
        <begin position="355"/>
        <end position="1783"/>
    </location>
</feature>
<feature type="sequence variant" id="VAR_037284" description="In dbSNP:rs11031357.">
    <original>E</original>
    <variation>G</variation>
    <location>
        <position position="7"/>
    </location>
</feature>
<feature type="sequence variant" id="VAR_033767" description="In dbSNP:rs2761591.">
    <original>V</original>
    <variation>M</variation>
    <location>
        <position position="83"/>
    </location>
</feature>
<feature type="sequence conflict" description="In Ref. 1; AAP75563." evidence="6" ref="1">
    <original>V</original>
    <variation>A</variation>
    <location>
        <position position="192"/>
    </location>
</feature>
<accession>M0R2J8</accession>
<accession>A6PVL6</accession>
<accession>B1AL47</accession>
<accession>B7WNX6</accession>
<accession>P59894</accession>
<accession>Q6ZRR9</accession>
<accession>Q6ZU04</accession>
<protein>
    <recommendedName>
        <fullName evidence="6">Doublecortin domain-containing protein 1</fullName>
    </recommendedName>
    <alternativeName>
        <fullName evidence="5">Doublecortin domain-containing 5 protein</fullName>
    </alternativeName>
</protein>
<dbReference type="EMBL" id="AY247970">
    <property type="protein sequence ID" value="AAP75563.1"/>
    <property type="molecule type" value="mRNA"/>
</dbReference>
<dbReference type="EMBL" id="AK126066">
    <property type="protein sequence ID" value="BAC86423.2"/>
    <property type="molecule type" value="mRNA"/>
</dbReference>
<dbReference type="EMBL" id="AK128035">
    <property type="protein sequence ID" value="BAC87240.1"/>
    <property type="status" value="ALT_SEQ"/>
    <property type="molecule type" value="mRNA"/>
</dbReference>
<dbReference type="EMBL" id="AL133296">
    <property type="status" value="NOT_ANNOTATED_CDS"/>
    <property type="molecule type" value="Genomic_DNA"/>
</dbReference>
<dbReference type="EMBL" id="AL133349">
    <property type="status" value="NOT_ANNOTATED_CDS"/>
    <property type="molecule type" value="Genomic_DNA"/>
</dbReference>
<dbReference type="EMBL" id="AL133376">
    <property type="status" value="NOT_ANNOTATED_CDS"/>
    <property type="molecule type" value="Genomic_DNA"/>
</dbReference>
<dbReference type="EMBL" id="AL135932">
    <property type="status" value="NOT_ANNOTATED_CDS"/>
    <property type="molecule type" value="Genomic_DNA"/>
</dbReference>
<dbReference type="EMBL" id="AL137160">
    <property type="status" value="NOT_ANNOTATED_CDS"/>
    <property type="molecule type" value="Genomic_DNA"/>
</dbReference>
<dbReference type="EMBL" id="AL137804">
    <property type="status" value="NOT_ANNOTATED_CDS"/>
    <property type="molecule type" value="Genomic_DNA"/>
</dbReference>
<dbReference type="EMBL" id="AL162614">
    <property type="status" value="NOT_ANNOTATED_CDS"/>
    <property type="molecule type" value="Genomic_DNA"/>
</dbReference>
<dbReference type="EMBL" id="KF455358">
    <property type="status" value="NOT_ANNOTATED_CDS"/>
    <property type="molecule type" value="Genomic_DNA"/>
</dbReference>
<dbReference type="CCDS" id="CCDS7872.1">
    <molecule id="M0R2J8-3"/>
</dbReference>
<dbReference type="CCDS" id="CCDS91454.1">
    <molecule id="M0R2J8-1"/>
</dbReference>
<dbReference type="RefSeq" id="NP_001354908.1">
    <molecule id="M0R2J8-1"/>
    <property type="nucleotide sequence ID" value="NM_001367979.1"/>
</dbReference>
<dbReference type="RefSeq" id="NP_861523.2">
    <molecule id="M0R2J8-3"/>
    <property type="nucleotide sequence ID" value="NM_181807.4"/>
</dbReference>
<dbReference type="BioGRID" id="131112">
    <property type="interactions" value="11"/>
</dbReference>
<dbReference type="FunCoup" id="M0R2J8">
    <property type="interactions" value="1"/>
</dbReference>
<dbReference type="IntAct" id="M0R2J8">
    <property type="interactions" value="4"/>
</dbReference>
<dbReference type="STRING" id="9606.ENSP00000385936"/>
<dbReference type="iPTMnet" id="M0R2J8"/>
<dbReference type="PhosphoSitePlus" id="M0R2J8"/>
<dbReference type="BioMuta" id="DCDC1"/>
<dbReference type="BioMuta" id="HGNC:24799"/>
<dbReference type="DMDM" id="190359182"/>
<dbReference type="jPOST" id="M0R2J8"/>
<dbReference type="MassIVE" id="M0R2J8"/>
<dbReference type="PaxDb" id="9606-ENSP00000385936"/>
<dbReference type="PeptideAtlas" id="M0R2J8"/>
<dbReference type="ProteomicsDB" id="6281"/>
<dbReference type="ProteomicsDB" id="68160"/>
<dbReference type="Antibodypedia" id="48955">
    <property type="antibodies" value="60 antibodies from 9 providers"/>
</dbReference>
<dbReference type="DNASU" id="341019"/>
<dbReference type="Ensembl" id="ENST00000342355.8">
    <molecule id="M0R2J8-2"/>
    <property type="protein sequence ID" value="ENSP00000343496.4"/>
    <property type="gene ID" value="ENSG00000170959.15"/>
</dbReference>
<dbReference type="Ensembl" id="ENST00000452803.1">
    <molecule id="M0R2J8-3"/>
    <property type="protein sequence ID" value="ENSP00000389792.1"/>
    <property type="gene ID" value="ENSG00000170959.15"/>
</dbReference>
<dbReference type="Ensembl" id="ENST00000597505.5">
    <molecule id="M0R2J8-1"/>
    <property type="protein sequence ID" value="ENSP00000472625.1"/>
    <property type="gene ID" value="ENSG00000170959.15"/>
</dbReference>
<dbReference type="GeneID" id="341019"/>
<dbReference type="KEGG" id="hsa:341019"/>
<dbReference type="UCSC" id="uc058aah.1">
    <molecule id="M0R2J8-1"/>
    <property type="organism name" value="human"/>
</dbReference>
<dbReference type="AGR" id="HGNC:20625"/>
<dbReference type="CTD" id="341019"/>
<dbReference type="DisGeNET" id="341019"/>
<dbReference type="GeneCards" id="DCDC1"/>
<dbReference type="HGNC" id="HGNC:20625">
    <property type="gene designation" value="DCDC1"/>
</dbReference>
<dbReference type="HPA" id="ENSG00000170959">
    <property type="expression patterns" value="Tissue enhanced (retina)"/>
</dbReference>
<dbReference type="MalaCards" id="DCDC1"/>
<dbReference type="MIM" id="608062">
    <property type="type" value="gene"/>
</dbReference>
<dbReference type="neXtProt" id="NX_M0R2J8"/>
<dbReference type="OpenTargets" id="ENSG00000170959"/>
<dbReference type="PharmGKB" id="PA134970075"/>
<dbReference type="VEuPathDB" id="HostDB:ENSG00000170959"/>
<dbReference type="eggNOG" id="ENOG502QW8Q">
    <property type="taxonomic scope" value="Eukaryota"/>
</dbReference>
<dbReference type="GeneTree" id="ENSGT00940000163628"/>
<dbReference type="HOGENOM" id="CLU_067120_0_1_1"/>
<dbReference type="InParanoid" id="M0R2J8"/>
<dbReference type="OMA" id="IMVAYKT"/>
<dbReference type="OrthoDB" id="9999986at2759"/>
<dbReference type="PAN-GO" id="M0R2J8">
    <property type="GO annotations" value="3 GO annotations based on evolutionary models"/>
</dbReference>
<dbReference type="PhylomeDB" id="M0R2J8"/>
<dbReference type="TreeFam" id="TF329467"/>
<dbReference type="PathwayCommons" id="M0R2J8"/>
<dbReference type="SignaLink" id="M0R2J8"/>
<dbReference type="BioGRID-ORCS" id="341019">
    <property type="hits" value="16 hits in 1150 CRISPR screens"/>
</dbReference>
<dbReference type="ChiTaRS" id="DCDC1">
    <property type="organism name" value="human"/>
</dbReference>
<dbReference type="GenomeRNAi" id="341019"/>
<dbReference type="PRO" id="PR:M0R2J8"/>
<dbReference type="Proteomes" id="UP000005640">
    <property type="component" value="Chromosome 11"/>
</dbReference>
<dbReference type="Bgee" id="ENSG00000170959">
    <property type="expression patterns" value="Expressed in oviduct epithelium and 108 other cell types or tissues"/>
</dbReference>
<dbReference type="ExpressionAtlas" id="M0R2J8">
    <property type="expression patterns" value="baseline and differential"/>
</dbReference>
<dbReference type="GO" id="GO:0005737">
    <property type="term" value="C:cytoplasm"/>
    <property type="evidence" value="ECO:0007669"/>
    <property type="project" value="UniProtKB-KW"/>
</dbReference>
<dbReference type="GO" id="GO:0090543">
    <property type="term" value="C:Flemming body"/>
    <property type="evidence" value="ECO:0000314"/>
    <property type="project" value="UniProtKB"/>
</dbReference>
<dbReference type="GO" id="GO:0005874">
    <property type="term" value="C:microtubule"/>
    <property type="evidence" value="ECO:0007669"/>
    <property type="project" value="UniProtKB-KW"/>
</dbReference>
<dbReference type="GO" id="GO:0030496">
    <property type="term" value="C:midbody"/>
    <property type="evidence" value="ECO:0000314"/>
    <property type="project" value="UniProtKB"/>
</dbReference>
<dbReference type="GO" id="GO:0072686">
    <property type="term" value="C:mitotic spindle"/>
    <property type="evidence" value="ECO:0000314"/>
    <property type="project" value="UniProtKB"/>
</dbReference>
<dbReference type="GO" id="GO:0030246">
    <property type="term" value="F:carbohydrate binding"/>
    <property type="evidence" value="ECO:0007669"/>
    <property type="project" value="UniProtKB-KW"/>
</dbReference>
<dbReference type="GO" id="GO:0008017">
    <property type="term" value="F:microtubule binding"/>
    <property type="evidence" value="ECO:0000314"/>
    <property type="project" value="UniProtKB"/>
</dbReference>
<dbReference type="GO" id="GO:0051301">
    <property type="term" value="P:cell division"/>
    <property type="evidence" value="ECO:0007669"/>
    <property type="project" value="UniProtKB-KW"/>
</dbReference>
<dbReference type="GO" id="GO:0035556">
    <property type="term" value="P:intracellular signal transduction"/>
    <property type="evidence" value="ECO:0007669"/>
    <property type="project" value="InterPro"/>
</dbReference>
<dbReference type="GO" id="GO:1902412">
    <property type="term" value="P:regulation of mitotic cytokinesis"/>
    <property type="evidence" value="ECO:0000315"/>
    <property type="project" value="UniProtKB"/>
</dbReference>
<dbReference type="CDD" id="cd23427">
    <property type="entry name" value="beta-trefoil_Ricin_DCDC1"/>
    <property type="match status" value="1"/>
</dbReference>
<dbReference type="CDD" id="cd17156">
    <property type="entry name" value="DCX1_DCDC5"/>
    <property type="match status" value="1"/>
</dbReference>
<dbReference type="CDD" id="cd17157">
    <property type="entry name" value="DCX2_DCDC5"/>
    <property type="match status" value="1"/>
</dbReference>
<dbReference type="CDD" id="cd17158">
    <property type="entry name" value="DCX3_DCDC5"/>
    <property type="match status" value="1"/>
</dbReference>
<dbReference type="CDD" id="cd17159">
    <property type="entry name" value="DCX4_DCDC5"/>
    <property type="match status" value="1"/>
</dbReference>
<dbReference type="CDD" id="cd17155">
    <property type="entry name" value="DCX_DCDC1"/>
    <property type="match status" value="1"/>
</dbReference>
<dbReference type="FunFam" id="2.80.10.50:FF:000071">
    <property type="entry name" value="Doublecortin domain containing 1"/>
    <property type="match status" value="1"/>
</dbReference>
<dbReference type="Gene3D" id="2.80.10.50">
    <property type="match status" value="1"/>
</dbReference>
<dbReference type="Gene3D" id="3.10.20.230">
    <property type="entry name" value="Doublecortin domain"/>
    <property type="match status" value="2"/>
</dbReference>
<dbReference type="InterPro" id="IPR043188">
    <property type="entry name" value="DCDC1"/>
</dbReference>
<dbReference type="InterPro" id="IPR056415">
    <property type="entry name" value="DCX2_DCDC1"/>
</dbReference>
<dbReference type="InterPro" id="IPR003533">
    <property type="entry name" value="Doublecortin_dom"/>
</dbReference>
<dbReference type="InterPro" id="IPR036572">
    <property type="entry name" value="Doublecortin_dom_sf"/>
</dbReference>
<dbReference type="InterPro" id="IPR035992">
    <property type="entry name" value="Ricin_B-like_lectins"/>
</dbReference>
<dbReference type="PANTHER" id="PTHR46302">
    <property type="entry name" value="DOUBLECORTIN DOMAIN-CONTAINING PROTEIN 1"/>
    <property type="match status" value="1"/>
</dbReference>
<dbReference type="PANTHER" id="PTHR46302:SF3">
    <property type="entry name" value="DOUBLECORTIN DOMAIN-CONTAINING PROTEIN 1"/>
    <property type="match status" value="1"/>
</dbReference>
<dbReference type="Pfam" id="PF24478">
    <property type="entry name" value="DCX2_DCDC1"/>
    <property type="match status" value="1"/>
</dbReference>
<dbReference type="Pfam" id="PF25510">
    <property type="entry name" value="Ubiquitin_DCDC1"/>
    <property type="match status" value="1"/>
</dbReference>
<dbReference type="SMART" id="SM00537">
    <property type="entry name" value="DCX"/>
    <property type="match status" value="3"/>
</dbReference>
<dbReference type="SUPFAM" id="SSF89837">
    <property type="entry name" value="Doublecortin (DC)"/>
    <property type="match status" value="5"/>
</dbReference>
<dbReference type="SUPFAM" id="SSF50370">
    <property type="entry name" value="Ricin B-like lectins"/>
    <property type="match status" value="2"/>
</dbReference>
<dbReference type="PROSITE" id="PS50309">
    <property type="entry name" value="DC"/>
    <property type="match status" value="2"/>
</dbReference>
<dbReference type="PROSITE" id="PS50231">
    <property type="entry name" value="RICIN_B_LECTIN"/>
    <property type="match status" value="2"/>
</dbReference>
<reference key="1">
    <citation type="journal article" date="2003" name="J. Hum. Genet.">
        <title>Identification of a novel human doublecortin-domain-containing gene (DCDC1) expressed mainly in testis.</title>
        <authorList>
            <person name="Zeng L."/>
            <person name="Gu S."/>
            <person name="Li Y."/>
            <person name="Zhao E."/>
            <person name="Xu J."/>
            <person name="Ye X."/>
            <person name="Wu Q."/>
            <person name="Wang L."/>
            <person name="Xie Y."/>
            <person name="Mao Y."/>
        </authorList>
    </citation>
    <scope>NUCLEOTIDE SEQUENCE [MRNA] (ISOFORM 3)</scope>
    <scope>TISSUE SPECIFICITY</scope>
    <source>
        <tissue>Fetal brain</tissue>
    </source>
</reference>
<reference key="2">
    <citation type="journal article" date="2004" name="Nat. Genet.">
        <title>Complete sequencing and characterization of 21,243 full-length human cDNAs.</title>
        <authorList>
            <person name="Ota T."/>
            <person name="Suzuki Y."/>
            <person name="Nishikawa T."/>
            <person name="Otsuki T."/>
            <person name="Sugiyama T."/>
            <person name="Irie R."/>
            <person name="Wakamatsu A."/>
            <person name="Hayashi K."/>
            <person name="Sato H."/>
            <person name="Nagai K."/>
            <person name="Kimura K."/>
            <person name="Makita H."/>
            <person name="Sekine M."/>
            <person name="Obayashi M."/>
            <person name="Nishi T."/>
            <person name="Shibahara T."/>
            <person name="Tanaka T."/>
            <person name="Ishii S."/>
            <person name="Yamamoto J."/>
            <person name="Saito K."/>
            <person name="Kawai Y."/>
            <person name="Isono Y."/>
            <person name="Nakamura Y."/>
            <person name="Nagahari K."/>
            <person name="Murakami K."/>
            <person name="Yasuda T."/>
            <person name="Iwayanagi T."/>
            <person name="Wagatsuma M."/>
            <person name="Shiratori A."/>
            <person name="Sudo H."/>
            <person name="Hosoiri T."/>
            <person name="Kaku Y."/>
            <person name="Kodaira H."/>
            <person name="Kondo H."/>
            <person name="Sugawara M."/>
            <person name="Takahashi M."/>
            <person name="Kanda K."/>
            <person name="Yokoi T."/>
            <person name="Furuya T."/>
            <person name="Kikkawa E."/>
            <person name="Omura Y."/>
            <person name="Abe K."/>
            <person name="Kamihara K."/>
            <person name="Katsuta N."/>
            <person name="Sato K."/>
            <person name="Tanikawa M."/>
            <person name="Yamazaki M."/>
            <person name="Ninomiya K."/>
            <person name="Ishibashi T."/>
            <person name="Yamashita H."/>
            <person name="Murakawa K."/>
            <person name="Fujimori K."/>
            <person name="Tanai H."/>
            <person name="Kimata M."/>
            <person name="Watanabe M."/>
            <person name="Hiraoka S."/>
            <person name="Chiba Y."/>
            <person name="Ishida S."/>
            <person name="Ono Y."/>
            <person name="Takiguchi S."/>
            <person name="Watanabe S."/>
            <person name="Yosida M."/>
            <person name="Hotuta T."/>
            <person name="Kusano J."/>
            <person name="Kanehori K."/>
            <person name="Takahashi-Fujii A."/>
            <person name="Hara H."/>
            <person name="Tanase T.-O."/>
            <person name="Nomura Y."/>
            <person name="Togiya S."/>
            <person name="Komai F."/>
            <person name="Hara R."/>
            <person name="Takeuchi K."/>
            <person name="Arita M."/>
            <person name="Imose N."/>
            <person name="Musashino K."/>
            <person name="Yuuki H."/>
            <person name="Oshima A."/>
            <person name="Sasaki N."/>
            <person name="Aotsuka S."/>
            <person name="Yoshikawa Y."/>
            <person name="Matsunawa H."/>
            <person name="Ichihara T."/>
            <person name="Shiohata N."/>
            <person name="Sano S."/>
            <person name="Moriya S."/>
            <person name="Momiyama H."/>
            <person name="Satoh N."/>
            <person name="Takami S."/>
            <person name="Terashima Y."/>
            <person name="Suzuki O."/>
            <person name="Nakagawa S."/>
            <person name="Senoh A."/>
            <person name="Mizoguchi H."/>
            <person name="Goto Y."/>
            <person name="Shimizu F."/>
            <person name="Wakebe H."/>
            <person name="Hishigaki H."/>
            <person name="Watanabe T."/>
            <person name="Sugiyama A."/>
            <person name="Takemoto M."/>
            <person name="Kawakami B."/>
            <person name="Yamazaki M."/>
            <person name="Watanabe K."/>
            <person name="Kumagai A."/>
            <person name="Itakura S."/>
            <person name="Fukuzumi Y."/>
            <person name="Fujimori Y."/>
            <person name="Komiyama M."/>
            <person name="Tashiro H."/>
            <person name="Tanigami A."/>
            <person name="Fujiwara T."/>
            <person name="Ono T."/>
            <person name="Yamada K."/>
            <person name="Fujii Y."/>
            <person name="Ozaki K."/>
            <person name="Hirao M."/>
            <person name="Ohmori Y."/>
            <person name="Kawabata A."/>
            <person name="Hikiji T."/>
            <person name="Kobatake N."/>
            <person name="Inagaki H."/>
            <person name="Ikema Y."/>
            <person name="Okamoto S."/>
            <person name="Okitani R."/>
            <person name="Kawakami T."/>
            <person name="Noguchi S."/>
            <person name="Itoh T."/>
            <person name="Shigeta K."/>
            <person name="Senba T."/>
            <person name="Matsumura K."/>
            <person name="Nakajima Y."/>
            <person name="Mizuno T."/>
            <person name="Morinaga M."/>
            <person name="Sasaki M."/>
            <person name="Togashi T."/>
            <person name="Oyama M."/>
            <person name="Hata H."/>
            <person name="Watanabe M."/>
            <person name="Komatsu T."/>
            <person name="Mizushima-Sugano J."/>
            <person name="Satoh T."/>
            <person name="Shirai Y."/>
            <person name="Takahashi Y."/>
            <person name="Nakagawa K."/>
            <person name="Okumura K."/>
            <person name="Nagase T."/>
            <person name="Nomura N."/>
            <person name="Kikuchi H."/>
            <person name="Masuho Y."/>
            <person name="Yamashita R."/>
            <person name="Nakai K."/>
            <person name="Yada T."/>
            <person name="Nakamura Y."/>
            <person name="Ohara O."/>
            <person name="Isogai T."/>
            <person name="Sugano S."/>
        </authorList>
    </citation>
    <scope>NUCLEOTIDE SEQUENCE [LARGE SCALE MRNA] (ISOFORM 2)</scope>
    <source>
        <tissue>Testis</tissue>
    </source>
</reference>
<reference key="3">
    <citation type="journal article" date="2006" name="Nature">
        <title>Human chromosome 11 DNA sequence and analysis including novel gene identification.</title>
        <authorList>
            <person name="Taylor T.D."/>
            <person name="Noguchi H."/>
            <person name="Totoki Y."/>
            <person name="Toyoda A."/>
            <person name="Kuroki Y."/>
            <person name="Dewar K."/>
            <person name="Lloyd C."/>
            <person name="Itoh T."/>
            <person name="Takeda T."/>
            <person name="Kim D.-W."/>
            <person name="She X."/>
            <person name="Barlow K.F."/>
            <person name="Bloom T."/>
            <person name="Bruford E."/>
            <person name="Chang J.L."/>
            <person name="Cuomo C.A."/>
            <person name="Eichler E."/>
            <person name="FitzGerald M.G."/>
            <person name="Jaffe D.B."/>
            <person name="LaButti K."/>
            <person name="Nicol R."/>
            <person name="Park H.-S."/>
            <person name="Seaman C."/>
            <person name="Sougnez C."/>
            <person name="Yang X."/>
            <person name="Zimmer A.R."/>
            <person name="Zody M.C."/>
            <person name="Birren B.W."/>
            <person name="Nusbaum C."/>
            <person name="Fujiyama A."/>
            <person name="Hattori M."/>
            <person name="Rogers J."/>
            <person name="Lander E.S."/>
            <person name="Sakaki Y."/>
        </authorList>
    </citation>
    <scope>NUCLEOTIDE SEQUENCE [LARGE SCALE GENOMIC DNA]</scope>
</reference>
<reference key="4">
    <citation type="journal article" date="2011" name="J. Cell Sci.">
        <title>Linking cytoplasmic dynein and transport of Rab8 vesicles to the midbody during cytokinesis by the doublecortin domain-containing 5 protein.</title>
        <authorList>
            <person name="Kaplan A."/>
            <person name="Reiner O."/>
        </authorList>
    </citation>
    <scope>FUNCTION</scope>
    <scope>SUBCELLULAR LOCATION</scope>
    <scope>MICROTUBULE-BINDING</scope>
    <scope>INTERACTION WITH DYNEIN INTERMEDIATE CHAIN; TUBULIN; RAB8A; RAB3IP; NUDC; PAFAH1B1 AND DCTN1</scope>
</reference>